<organism>
    <name type="scientific">Pseudomonas entomophila (strain L48)</name>
    <dbReference type="NCBI Taxonomy" id="384676"/>
    <lineage>
        <taxon>Bacteria</taxon>
        <taxon>Pseudomonadati</taxon>
        <taxon>Pseudomonadota</taxon>
        <taxon>Gammaproteobacteria</taxon>
        <taxon>Pseudomonadales</taxon>
        <taxon>Pseudomonadaceae</taxon>
        <taxon>Pseudomonas</taxon>
    </lineage>
</organism>
<reference key="1">
    <citation type="journal article" date="2006" name="Nat. Biotechnol.">
        <title>Complete genome sequence of the entomopathogenic and metabolically versatile soil bacterium Pseudomonas entomophila.</title>
        <authorList>
            <person name="Vodovar N."/>
            <person name="Vallenet D."/>
            <person name="Cruveiller S."/>
            <person name="Rouy Z."/>
            <person name="Barbe V."/>
            <person name="Acosta C."/>
            <person name="Cattolico L."/>
            <person name="Jubin C."/>
            <person name="Lajus A."/>
            <person name="Segurens B."/>
            <person name="Vacherie B."/>
            <person name="Wincker P."/>
            <person name="Weissenbach J."/>
            <person name="Lemaitre B."/>
            <person name="Medigue C."/>
            <person name="Boccard F."/>
        </authorList>
    </citation>
    <scope>NUCLEOTIDE SEQUENCE [LARGE SCALE GENOMIC DNA]</scope>
    <source>
        <strain>L48</strain>
    </source>
</reference>
<protein>
    <recommendedName>
        <fullName evidence="1">Glycine--tRNA ligase beta subunit</fullName>
        <ecNumber evidence="1">6.1.1.14</ecNumber>
    </recommendedName>
    <alternativeName>
        <fullName evidence="1">Glycyl-tRNA synthetase beta subunit</fullName>
        <shortName evidence="1">GlyRS</shortName>
    </alternativeName>
</protein>
<name>SYGB_PSEE4</name>
<evidence type="ECO:0000255" key="1">
    <source>
        <dbReference type="HAMAP-Rule" id="MF_00255"/>
    </source>
</evidence>
<proteinExistence type="inferred from homology"/>
<keyword id="KW-0030">Aminoacyl-tRNA synthetase</keyword>
<keyword id="KW-0067">ATP-binding</keyword>
<keyword id="KW-0963">Cytoplasm</keyword>
<keyword id="KW-0436">Ligase</keyword>
<keyword id="KW-0547">Nucleotide-binding</keyword>
<keyword id="KW-0648">Protein biosynthesis</keyword>
<gene>
    <name evidence="1" type="primary">glyS</name>
    <name type="ordered locus">PSEEN0016</name>
</gene>
<dbReference type="EC" id="6.1.1.14" evidence="1"/>
<dbReference type="EMBL" id="CT573326">
    <property type="protein sequence ID" value="CAK13011.1"/>
    <property type="molecule type" value="Genomic_DNA"/>
</dbReference>
<dbReference type="RefSeq" id="WP_011531472.1">
    <property type="nucleotide sequence ID" value="NC_008027.1"/>
</dbReference>
<dbReference type="SMR" id="Q1IH28"/>
<dbReference type="STRING" id="384676.PSEEN0016"/>
<dbReference type="GeneID" id="32803385"/>
<dbReference type="KEGG" id="pen:PSEEN0016"/>
<dbReference type="eggNOG" id="COG0751">
    <property type="taxonomic scope" value="Bacteria"/>
</dbReference>
<dbReference type="HOGENOM" id="CLU_007220_2_2_6"/>
<dbReference type="OrthoDB" id="9775440at2"/>
<dbReference type="Proteomes" id="UP000000658">
    <property type="component" value="Chromosome"/>
</dbReference>
<dbReference type="GO" id="GO:0005829">
    <property type="term" value="C:cytosol"/>
    <property type="evidence" value="ECO:0007669"/>
    <property type="project" value="TreeGrafter"/>
</dbReference>
<dbReference type="GO" id="GO:0004814">
    <property type="term" value="F:arginine-tRNA ligase activity"/>
    <property type="evidence" value="ECO:0007669"/>
    <property type="project" value="InterPro"/>
</dbReference>
<dbReference type="GO" id="GO:0005524">
    <property type="term" value="F:ATP binding"/>
    <property type="evidence" value="ECO:0007669"/>
    <property type="project" value="UniProtKB-UniRule"/>
</dbReference>
<dbReference type="GO" id="GO:0004820">
    <property type="term" value="F:glycine-tRNA ligase activity"/>
    <property type="evidence" value="ECO:0007669"/>
    <property type="project" value="UniProtKB-UniRule"/>
</dbReference>
<dbReference type="GO" id="GO:0006420">
    <property type="term" value="P:arginyl-tRNA aminoacylation"/>
    <property type="evidence" value="ECO:0007669"/>
    <property type="project" value="InterPro"/>
</dbReference>
<dbReference type="GO" id="GO:0006426">
    <property type="term" value="P:glycyl-tRNA aminoacylation"/>
    <property type="evidence" value="ECO:0007669"/>
    <property type="project" value="UniProtKB-UniRule"/>
</dbReference>
<dbReference type="HAMAP" id="MF_00255">
    <property type="entry name" value="Gly_tRNA_synth_beta"/>
    <property type="match status" value="1"/>
</dbReference>
<dbReference type="InterPro" id="IPR008909">
    <property type="entry name" value="DALR_anticod-bd"/>
</dbReference>
<dbReference type="InterPro" id="IPR015944">
    <property type="entry name" value="Gly-tRNA-synth_bsu"/>
</dbReference>
<dbReference type="InterPro" id="IPR006194">
    <property type="entry name" value="Gly-tRNA-synth_heterodimer"/>
</dbReference>
<dbReference type="NCBIfam" id="TIGR00211">
    <property type="entry name" value="glyS"/>
    <property type="match status" value="1"/>
</dbReference>
<dbReference type="PANTHER" id="PTHR30075:SF2">
    <property type="entry name" value="GLYCINE--TRNA LIGASE, CHLOROPLASTIC_MITOCHONDRIAL 2"/>
    <property type="match status" value="1"/>
</dbReference>
<dbReference type="PANTHER" id="PTHR30075">
    <property type="entry name" value="GLYCYL-TRNA SYNTHETASE"/>
    <property type="match status" value="1"/>
</dbReference>
<dbReference type="Pfam" id="PF05746">
    <property type="entry name" value="DALR_1"/>
    <property type="match status" value="1"/>
</dbReference>
<dbReference type="Pfam" id="PF02092">
    <property type="entry name" value="tRNA_synt_2f"/>
    <property type="match status" value="1"/>
</dbReference>
<dbReference type="PRINTS" id="PR01045">
    <property type="entry name" value="TRNASYNTHGB"/>
</dbReference>
<dbReference type="SUPFAM" id="SSF109604">
    <property type="entry name" value="HD-domain/PDEase-like"/>
    <property type="match status" value="1"/>
</dbReference>
<dbReference type="PROSITE" id="PS50861">
    <property type="entry name" value="AA_TRNA_LIGASE_II_GLYAB"/>
    <property type="match status" value="1"/>
</dbReference>
<comment type="catalytic activity">
    <reaction evidence="1">
        <text>tRNA(Gly) + glycine + ATP = glycyl-tRNA(Gly) + AMP + diphosphate</text>
        <dbReference type="Rhea" id="RHEA:16013"/>
        <dbReference type="Rhea" id="RHEA-COMP:9664"/>
        <dbReference type="Rhea" id="RHEA-COMP:9683"/>
        <dbReference type="ChEBI" id="CHEBI:30616"/>
        <dbReference type="ChEBI" id="CHEBI:33019"/>
        <dbReference type="ChEBI" id="CHEBI:57305"/>
        <dbReference type="ChEBI" id="CHEBI:78442"/>
        <dbReference type="ChEBI" id="CHEBI:78522"/>
        <dbReference type="ChEBI" id="CHEBI:456215"/>
        <dbReference type="EC" id="6.1.1.14"/>
    </reaction>
</comment>
<comment type="subunit">
    <text evidence="1">Tetramer of two alpha and two beta subunits.</text>
</comment>
<comment type="subcellular location">
    <subcellularLocation>
        <location evidence="1">Cytoplasm</location>
    </subcellularLocation>
</comment>
<comment type="similarity">
    <text evidence="1">Belongs to the class-II aminoacyl-tRNA synthetase family.</text>
</comment>
<accession>Q1IH28</accession>
<sequence>MSAQDFLVELGTEELPPKALASLGDAFLAGIEKGLQAAGLNYTSKQVYAAPRRLAVLLRQLDVQQPDRSINIDGPPRQAAFDAEGNPTQAALGFAKKCGVELSDIDQSGPKLRFSQHIPGKATASLLPTIVEDSLNDLPIPKRMHWGASREEFVRPTQWLVMLLGDQVVDCTILAQKAGRESRGHRFHHPENVVITTPANYVEDLRKAYVLADFAERRELISKRTAELAMQQEGSAIVPPALLDEVTALVEWPVPLVCSFEERFLEVPQEALITTMQDNQKYFCLLDSEGKLLPRFITVANVESRDPKQIVEGNEKVVRPRLTDAEFFFKQDKKQPLESFNERLKNVVFQAQLGTVFDKAERVSKLAAFIAPYIGGSAANAGRAGLLSKCDLASEMVGEFPEMQGIAGYYYALNDGEPQDVALALNEQYMPRGAGAELPQTLTGAAVAIADKLDTLVGIFGIGMLPTGSKDPYALRRAALGVLRILIEKQLDLDLTTAVEFAVKQFGTKVKAAGLSEQVLEFIFDRLRARYEDEGIDVATYLSVRALKPGSALDFDQRVQAVQAFRKLPEANALAAANKRVSNLLGKAEGAIADQVEPKYFDNANEFSLYSAIQQADQAVQPMASARQYNEALARLAALRDPVDAFFEAVLVNAEDAKVRANRYALLSRLRGLFLGVADISLLG</sequence>
<feature type="chain" id="PRO_1000006388" description="Glycine--tRNA ligase beta subunit">
    <location>
        <begin position="1"/>
        <end position="684"/>
    </location>
</feature>